<keyword id="KW-1185">Reference proteome</keyword>
<protein>
    <recommendedName>
        <fullName>Uncharacterized protein TP_0232</fullName>
    </recommendedName>
</protein>
<gene>
    <name type="ordered locus">TP_0232</name>
</gene>
<name>Y232_TREPA</name>
<feature type="chain" id="PRO_0000202216" description="Uncharacterized protein TP_0232">
    <location>
        <begin position="1"/>
        <end position="38"/>
    </location>
</feature>
<dbReference type="EMBL" id="AE000520">
    <property type="protein sequence ID" value="AAC65231.1"/>
    <property type="molecule type" value="Genomic_DNA"/>
</dbReference>
<dbReference type="PIR" id="B71349">
    <property type="entry name" value="B71349"/>
</dbReference>
<dbReference type="IntAct" id="O83260">
    <property type="interactions" value="7"/>
</dbReference>
<dbReference type="STRING" id="243276.TP_0232"/>
<dbReference type="EnsemblBacteria" id="AAC65231">
    <property type="protein sequence ID" value="AAC65231"/>
    <property type="gene ID" value="TP_0232"/>
</dbReference>
<dbReference type="KEGG" id="tpa:TP_0232"/>
<dbReference type="HOGENOM" id="CLU_3334255_0_0_12"/>
<dbReference type="Proteomes" id="UP000000811">
    <property type="component" value="Chromosome"/>
</dbReference>
<proteinExistence type="predicted"/>
<reference key="1">
    <citation type="journal article" date="1998" name="Science">
        <title>Complete genome sequence of Treponema pallidum, the syphilis spirochete.</title>
        <authorList>
            <person name="Fraser C.M."/>
            <person name="Norris S.J."/>
            <person name="Weinstock G.M."/>
            <person name="White O."/>
            <person name="Sutton G.G."/>
            <person name="Dodson R.J."/>
            <person name="Gwinn M.L."/>
            <person name="Hickey E.K."/>
            <person name="Clayton R.A."/>
            <person name="Ketchum K.A."/>
            <person name="Sodergren E."/>
            <person name="Hardham J.M."/>
            <person name="McLeod M.P."/>
            <person name="Salzberg S.L."/>
            <person name="Peterson J.D."/>
            <person name="Khalak H.G."/>
            <person name="Richardson D.L."/>
            <person name="Howell J.K."/>
            <person name="Chidambaram M."/>
            <person name="Utterback T.R."/>
            <person name="McDonald L.A."/>
            <person name="Artiach P."/>
            <person name="Bowman C."/>
            <person name="Cotton M.D."/>
            <person name="Fujii C."/>
            <person name="Garland S.A."/>
            <person name="Hatch B."/>
            <person name="Horst K."/>
            <person name="Roberts K.M."/>
            <person name="Sandusky M."/>
            <person name="Weidman J.F."/>
            <person name="Smith H.O."/>
            <person name="Venter J.C."/>
        </authorList>
    </citation>
    <scope>NUCLEOTIDE SEQUENCE [LARGE SCALE GENOMIC DNA]</scope>
    <source>
        <strain>Nichols</strain>
    </source>
</reference>
<sequence>MYCTRCVFAGARGGERSPAAVLSVGKIPAPIVISGYLC</sequence>
<organism>
    <name type="scientific">Treponema pallidum (strain Nichols)</name>
    <dbReference type="NCBI Taxonomy" id="243276"/>
    <lineage>
        <taxon>Bacteria</taxon>
        <taxon>Pseudomonadati</taxon>
        <taxon>Spirochaetota</taxon>
        <taxon>Spirochaetia</taxon>
        <taxon>Spirochaetales</taxon>
        <taxon>Treponemataceae</taxon>
        <taxon>Treponema</taxon>
    </lineage>
</organism>
<accession>O83260</accession>